<dbReference type="EC" id="3.5.3.-"/>
<dbReference type="EMBL" id="BA000002">
    <property type="protein sequence ID" value="BAA81618.2"/>
    <property type="molecule type" value="Genomic_DNA"/>
</dbReference>
<dbReference type="PIR" id="B72495">
    <property type="entry name" value="B72495"/>
</dbReference>
<dbReference type="SMR" id="Q9Y8N2"/>
<dbReference type="STRING" id="272557.APE_2601.1"/>
<dbReference type="EnsemblBacteria" id="BAA81618">
    <property type="protein sequence ID" value="BAA81618"/>
    <property type="gene ID" value="APE_2601.1"/>
</dbReference>
<dbReference type="KEGG" id="ape:APE_2601.1"/>
<dbReference type="PATRIC" id="fig|272557.25.peg.1722"/>
<dbReference type="eggNOG" id="arCOG03109">
    <property type="taxonomic scope" value="Archaea"/>
</dbReference>
<dbReference type="Proteomes" id="UP000002518">
    <property type="component" value="Chromosome"/>
</dbReference>
<dbReference type="GO" id="GO:0016597">
    <property type="term" value="F:amino acid binding"/>
    <property type="evidence" value="ECO:0007669"/>
    <property type="project" value="TreeGrafter"/>
</dbReference>
<dbReference type="GO" id="GO:0016403">
    <property type="term" value="F:dimethylargininase activity"/>
    <property type="evidence" value="ECO:0007669"/>
    <property type="project" value="TreeGrafter"/>
</dbReference>
<dbReference type="GO" id="GO:0006525">
    <property type="term" value="P:arginine metabolic process"/>
    <property type="evidence" value="ECO:0007669"/>
    <property type="project" value="TreeGrafter"/>
</dbReference>
<dbReference type="GO" id="GO:0000052">
    <property type="term" value="P:citrulline metabolic process"/>
    <property type="evidence" value="ECO:0007669"/>
    <property type="project" value="TreeGrafter"/>
</dbReference>
<dbReference type="GO" id="GO:0045429">
    <property type="term" value="P:positive regulation of nitric oxide biosynthetic process"/>
    <property type="evidence" value="ECO:0007669"/>
    <property type="project" value="TreeGrafter"/>
</dbReference>
<dbReference type="Gene3D" id="3.75.10.10">
    <property type="entry name" value="L-arginine/glycine Amidinotransferase, Chain A"/>
    <property type="match status" value="1"/>
</dbReference>
<dbReference type="InterPro" id="IPR033199">
    <property type="entry name" value="DDAH-like"/>
</dbReference>
<dbReference type="PANTHER" id="PTHR12737:SF9">
    <property type="entry name" value="DIMETHYLARGININASE"/>
    <property type="match status" value="1"/>
</dbReference>
<dbReference type="PANTHER" id="PTHR12737">
    <property type="entry name" value="DIMETHYLARGININE DIMETHYLAMINOHYDROLASE"/>
    <property type="match status" value="1"/>
</dbReference>
<dbReference type="Pfam" id="PF19420">
    <property type="entry name" value="DDAH_eukar"/>
    <property type="match status" value="1"/>
</dbReference>
<dbReference type="SUPFAM" id="SSF55909">
    <property type="entry name" value="Pentein"/>
    <property type="match status" value="1"/>
</dbReference>
<evidence type="ECO:0000255" key="1"/>
<evidence type="ECO:0000305" key="2"/>
<accession>Q9Y8N2</accession>
<comment type="similarity">
    <text evidence="2">Belongs to the DDAH family.</text>
</comment>
<gene>
    <name type="ordered locus">APE_2601.1</name>
</gene>
<sequence>MVGMGDRLFNMVFTRRPPQSMSRCISDPGYRAAARFSYEEASAQYKVYVERLHSAGITVKELGPLEDYPDSVFIQDTAVIGGGSRVAVLARFGAPSRRGEEGHVVSILSSMGLEIHPVKPPGTLEGGDVLVTGEGVVFAGLSSRTNREGVETLKTAFPNVNVETLNAKGLHLLSHLGYLGKATLISAEGLYDKSIFKRHGFDLIEIPWEERDAANLLYLGEGRVLLPAGYNQTRDLLEQHGFRIVEAEIRQFMACMGGVTCLSLPIYNIL</sequence>
<proteinExistence type="inferred from homology"/>
<protein>
    <recommendedName>
        <fullName>Uncharacterized protein APE_2601.1</fullName>
        <ecNumber>3.5.3.-</ecNumber>
    </recommendedName>
</protein>
<organism>
    <name type="scientific">Aeropyrum pernix (strain ATCC 700893 / DSM 11879 / JCM 9820 / NBRC 100138 / K1)</name>
    <dbReference type="NCBI Taxonomy" id="272557"/>
    <lineage>
        <taxon>Archaea</taxon>
        <taxon>Thermoproteota</taxon>
        <taxon>Thermoprotei</taxon>
        <taxon>Desulfurococcales</taxon>
        <taxon>Desulfurococcaceae</taxon>
        <taxon>Aeropyrum</taxon>
    </lineage>
</organism>
<name>Y2601_AERPE</name>
<reference key="1">
    <citation type="journal article" date="1999" name="DNA Res.">
        <title>Complete genome sequence of an aerobic hyper-thermophilic crenarchaeon, Aeropyrum pernix K1.</title>
        <authorList>
            <person name="Kawarabayasi Y."/>
            <person name="Hino Y."/>
            <person name="Horikawa H."/>
            <person name="Yamazaki S."/>
            <person name="Haikawa Y."/>
            <person name="Jin-no K."/>
            <person name="Takahashi M."/>
            <person name="Sekine M."/>
            <person name="Baba S."/>
            <person name="Ankai A."/>
            <person name="Kosugi H."/>
            <person name="Hosoyama A."/>
            <person name="Fukui S."/>
            <person name="Nagai Y."/>
            <person name="Nishijima K."/>
            <person name="Nakazawa H."/>
            <person name="Takamiya M."/>
            <person name="Masuda S."/>
            <person name="Funahashi T."/>
            <person name="Tanaka T."/>
            <person name="Kudoh Y."/>
            <person name="Yamazaki J."/>
            <person name="Kushida N."/>
            <person name="Oguchi A."/>
            <person name="Aoki K."/>
            <person name="Kubota K."/>
            <person name="Nakamura Y."/>
            <person name="Nomura N."/>
            <person name="Sako Y."/>
            <person name="Kikuchi H."/>
        </authorList>
    </citation>
    <scope>NUCLEOTIDE SEQUENCE [LARGE SCALE GENOMIC DNA]</scope>
    <source>
        <strain>ATCC 700893 / DSM 11879 / JCM 9820 / NBRC 100138 / K1</strain>
    </source>
</reference>
<feature type="chain" id="PRO_0000171125" description="Uncharacterized protein APE_2601.1">
    <location>
        <begin position="1"/>
        <end position="270"/>
    </location>
</feature>
<feature type="active site" description="Proton donor" evidence="1">
    <location>
        <position position="171"/>
    </location>
</feature>
<feature type="active site" description="Nucleophile" evidence="1">
    <location>
        <position position="261"/>
    </location>
</feature>
<keyword id="KW-0378">Hydrolase</keyword>
<keyword id="KW-1185">Reference proteome</keyword>